<accession>Q72XE8</accession>
<keyword id="KW-0066">ATP synthesis</keyword>
<keyword id="KW-0067">ATP-binding</keyword>
<keyword id="KW-1003">Cell membrane</keyword>
<keyword id="KW-0139">CF(1)</keyword>
<keyword id="KW-0375">Hydrogen ion transport</keyword>
<keyword id="KW-0406">Ion transport</keyword>
<keyword id="KW-0472">Membrane</keyword>
<keyword id="KW-0547">Nucleotide-binding</keyword>
<keyword id="KW-1278">Translocase</keyword>
<keyword id="KW-0813">Transport</keyword>
<comment type="function">
    <text evidence="1">Produces ATP from ADP in the presence of a proton gradient across the membrane. The catalytic sites are hosted primarily by the beta subunits.</text>
</comment>
<comment type="catalytic activity">
    <reaction evidence="1">
        <text>ATP + H2O + 4 H(+)(in) = ADP + phosphate + 5 H(+)(out)</text>
        <dbReference type="Rhea" id="RHEA:57720"/>
        <dbReference type="ChEBI" id="CHEBI:15377"/>
        <dbReference type="ChEBI" id="CHEBI:15378"/>
        <dbReference type="ChEBI" id="CHEBI:30616"/>
        <dbReference type="ChEBI" id="CHEBI:43474"/>
        <dbReference type="ChEBI" id="CHEBI:456216"/>
        <dbReference type="EC" id="7.1.2.2"/>
    </reaction>
</comment>
<comment type="subunit">
    <text evidence="1">F-type ATPases have 2 components, CF(1) - the catalytic core - and CF(0) - the membrane proton channel. CF(1) has five subunits: alpha(3), beta(3), gamma(1), delta(1), epsilon(1). CF(0) has three main subunits: a(1), b(2) and c(9-12). The alpha and beta chains form an alternating ring which encloses part of the gamma chain. CF(1) is attached to CF(0) by a central stalk formed by the gamma and epsilon chains, while a peripheral stalk is formed by the delta and b chains.</text>
</comment>
<comment type="subcellular location">
    <subcellularLocation>
        <location evidence="1">Cell membrane</location>
        <topology evidence="1">Peripheral membrane protein</topology>
    </subcellularLocation>
</comment>
<comment type="similarity">
    <text evidence="1">Belongs to the ATPase alpha/beta chains family.</text>
</comment>
<dbReference type="EC" id="7.1.2.2" evidence="1"/>
<dbReference type="EMBL" id="AE017194">
    <property type="protein sequence ID" value="AAS44330.1"/>
    <property type="molecule type" value="Genomic_DNA"/>
</dbReference>
<dbReference type="SMR" id="Q72XE8"/>
<dbReference type="KEGG" id="bca:BCE_5430"/>
<dbReference type="HOGENOM" id="CLU_022398_0_2_9"/>
<dbReference type="Proteomes" id="UP000002527">
    <property type="component" value="Chromosome"/>
</dbReference>
<dbReference type="GO" id="GO:0005886">
    <property type="term" value="C:plasma membrane"/>
    <property type="evidence" value="ECO:0007669"/>
    <property type="project" value="UniProtKB-SubCell"/>
</dbReference>
<dbReference type="GO" id="GO:0045259">
    <property type="term" value="C:proton-transporting ATP synthase complex"/>
    <property type="evidence" value="ECO:0007669"/>
    <property type="project" value="UniProtKB-KW"/>
</dbReference>
<dbReference type="GO" id="GO:0005524">
    <property type="term" value="F:ATP binding"/>
    <property type="evidence" value="ECO:0007669"/>
    <property type="project" value="UniProtKB-UniRule"/>
</dbReference>
<dbReference type="GO" id="GO:0016887">
    <property type="term" value="F:ATP hydrolysis activity"/>
    <property type="evidence" value="ECO:0007669"/>
    <property type="project" value="InterPro"/>
</dbReference>
<dbReference type="GO" id="GO:0046933">
    <property type="term" value="F:proton-transporting ATP synthase activity, rotational mechanism"/>
    <property type="evidence" value="ECO:0007669"/>
    <property type="project" value="UniProtKB-UniRule"/>
</dbReference>
<dbReference type="CDD" id="cd18110">
    <property type="entry name" value="ATP-synt_F1_beta_C"/>
    <property type="match status" value="1"/>
</dbReference>
<dbReference type="CDD" id="cd18115">
    <property type="entry name" value="ATP-synt_F1_beta_N"/>
    <property type="match status" value="1"/>
</dbReference>
<dbReference type="CDD" id="cd01133">
    <property type="entry name" value="F1-ATPase_beta_CD"/>
    <property type="match status" value="1"/>
</dbReference>
<dbReference type="FunFam" id="1.10.1140.10:FF:000001">
    <property type="entry name" value="ATP synthase subunit beta"/>
    <property type="match status" value="1"/>
</dbReference>
<dbReference type="FunFam" id="2.40.10.170:FF:000005">
    <property type="entry name" value="ATP synthase subunit beta"/>
    <property type="match status" value="1"/>
</dbReference>
<dbReference type="FunFam" id="3.40.50.300:FF:000004">
    <property type="entry name" value="ATP synthase subunit beta"/>
    <property type="match status" value="1"/>
</dbReference>
<dbReference type="Gene3D" id="2.40.10.170">
    <property type="match status" value="1"/>
</dbReference>
<dbReference type="Gene3D" id="1.10.1140.10">
    <property type="entry name" value="Bovine Mitochondrial F1-atpase, Atp Synthase Beta Chain, Chain D, domain 3"/>
    <property type="match status" value="1"/>
</dbReference>
<dbReference type="Gene3D" id="3.40.50.300">
    <property type="entry name" value="P-loop containing nucleotide triphosphate hydrolases"/>
    <property type="match status" value="1"/>
</dbReference>
<dbReference type="HAMAP" id="MF_01347">
    <property type="entry name" value="ATP_synth_beta_bact"/>
    <property type="match status" value="1"/>
</dbReference>
<dbReference type="InterPro" id="IPR003593">
    <property type="entry name" value="AAA+_ATPase"/>
</dbReference>
<dbReference type="InterPro" id="IPR055190">
    <property type="entry name" value="ATP-synt_VA_C"/>
</dbReference>
<dbReference type="InterPro" id="IPR005722">
    <property type="entry name" value="ATP_synth_F1_bsu"/>
</dbReference>
<dbReference type="InterPro" id="IPR020003">
    <property type="entry name" value="ATPase_a/bsu_AS"/>
</dbReference>
<dbReference type="InterPro" id="IPR050053">
    <property type="entry name" value="ATPase_alpha/beta_chains"/>
</dbReference>
<dbReference type="InterPro" id="IPR004100">
    <property type="entry name" value="ATPase_F1/V1/A1_a/bsu_N"/>
</dbReference>
<dbReference type="InterPro" id="IPR036121">
    <property type="entry name" value="ATPase_F1/V1/A1_a/bsu_N_sf"/>
</dbReference>
<dbReference type="InterPro" id="IPR000194">
    <property type="entry name" value="ATPase_F1/V1/A1_a/bsu_nucl-bd"/>
</dbReference>
<dbReference type="InterPro" id="IPR024034">
    <property type="entry name" value="ATPase_F1/V1_b/a_C"/>
</dbReference>
<dbReference type="InterPro" id="IPR027417">
    <property type="entry name" value="P-loop_NTPase"/>
</dbReference>
<dbReference type="NCBIfam" id="TIGR01039">
    <property type="entry name" value="atpD"/>
    <property type="match status" value="1"/>
</dbReference>
<dbReference type="PANTHER" id="PTHR15184">
    <property type="entry name" value="ATP SYNTHASE"/>
    <property type="match status" value="1"/>
</dbReference>
<dbReference type="PANTHER" id="PTHR15184:SF71">
    <property type="entry name" value="ATP SYNTHASE SUBUNIT BETA, MITOCHONDRIAL"/>
    <property type="match status" value="1"/>
</dbReference>
<dbReference type="Pfam" id="PF00006">
    <property type="entry name" value="ATP-synt_ab"/>
    <property type="match status" value="1"/>
</dbReference>
<dbReference type="Pfam" id="PF02874">
    <property type="entry name" value="ATP-synt_ab_N"/>
    <property type="match status" value="1"/>
</dbReference>
<dbReference type="Pfam" id="PF22919">
    <property type="entry name" value="ATP-synt_VA_C"/>
    <property type="match status" value="1"/>
</dbReference>
<dbReference type="SMART" id="SM00382">
    <property type="entry name" value="AAA"/>
    <property type="match status" value="1"/>
</dbReference>
<dbReference type="SUPFAM" id="SSF47917">
    <property type="entry name" value="C-terminal domain of alpha and beta subunits of F1 ATP synthase"/>
    <property type="match status" value="1"/>
</dbReference>
<dbReference type="SUPFAM" id="SSF50615">
    <property type="entry name" value="N-terminal domain of alpha and beta subunits of F1 ATP synthase"/>
    <property type="match status" value="1"/>
</dbReference>
<dbReference type="SUPFAM" id="SSF52540">
    <property type="entry name" value="P-loop containing nucleoside triphosphate hydrolases"/>
    <property type="match status" value="1"/>
</dbReference>
<dbReference type="PROSITE" id="PS00152">
    <property type="entry name" value="ATPASE_ALPHA_BETA"/>
    <property type="match status" value="1"/>
</dbReference>
<proteinExistence type="inferred from homology"/>
<sequence>MNKGRVTQIMGPVVDVKFDGGKLPEIYNALTVKQSNENGELNLTFEVALHLGDDTVRTVAMSSTDGLVRGTEVEDTGKAISVPVGDATLGRVFNVLGDAIDLDGEVPADVRRDPIHRQAPAFEELSTKVEILETGIKVVDLLAPYIKGGKIGLFGGAGVGKTVLIQELINNIAQEHGGISVFAGVGERTREGNDLYHEMSDSGVIKKTAMVFGQMNEPPGARQRVALTGLTMAEYFRDEQGQDVLLFIDNIFRFTQAGSEVSALLGRMPSAVGYQPTLATEMGQLQERITSTNKGSITSIQAVYVPADDYTDPAPATTFAHLDATTNLERRLTQMGIYPAVDPLASTSRALSPEIVGEEHYEVARQVQQTLQRYKELQDIIAILGMDELSEEDKLVVHRARRIQFFLSQNFHVAEQFTGQKGSYVPVKDTVRGFKEILEGKYDDLPEDAFRLVGGIEEVIENAKKMMA</sequence>
<organism>
    <name type="scientific">Bacillus cereus (strain ATCC 10987 / NRS 248)</name>
    <dbReference type="NCBI Taxonomy" id="222523"/>
    <lineage>
        <taxon>Bacteria</taxon>
        <taxon>Bacillati</taxon>
        <taxon>Bacillota</taxon>
        <taxon>Bacilli</taxon>
        <taxon>Bacillales</taxon>
        <taxon>Bacillaceae</taxon>
        <taxon>Bacillus</taxon>
        <taxon>Bacillus cereus group</taxon>
    </lineage>
</organism>
<gene>
    <name evidence="1" type="primary">atpD</name>
    <name type="ordered locus">BCE_5430</name>
</gene>
<feature type="chain" id="PRO_0000254206" description="ATP synthase subunit beta">
    <location>
        <begin position="1"/>
        <end position="468"/>
    </location>
</feature>
<feature type="binding site" evidence="1">
    <location>
        <begin position="155"/>
        <end position="162"/>
    </location>
    <ligand>
        <name>ATP</name>
        <dbReference type="ChEBI" id="CHEBI:30616"/>
    </ligand>
</feature>
<name>ATPB_BACC1</name>
<protein>
    <recommendedName>
        <fullName evidence="1">ATP synthase subunit beta</fullName>
        <ecNumber evidence="1">7.1.2.2</ecNumber>
    </recommendedName>
    <alternativeName>
        <fullName evidence="1">ATP synthase F1 sector subunit beta</fullName>
    </alternativeName>
    <alternativeName>
        <fullName evidence="1">F-ATPase subunit beta</fullName>
    </alternativeName>
</protein>
<evidence type="ECO:0000255" key="1">
    <source>
        <dbReference type="HAMAP-Rule" id="MF_01347"/>
    </source>
</evidence>
<reference key="1">
    <citation type="journal article" date="2004" name="Nucleic Acids Res.">
        <title>The genome sequence of Bacillus cereus ATCC 10987 reveals metabolic adaptations and a large plasmid related to Bacillus anthracis pXO1.</title>
        <authorList>
            <person name="Rasko D.A."/>
            <person name="Ravel J."/>
            <person name="Oekstad O.A."/>
            <person name="Helgason E."/>
            <person name="Cer R.Z."/>
            <person name="Jiang L."/>
            <person name="Shores K.A."/>
            <person name="Fouts D.E."/>
            <person name="Tourasse N.J."/>
            <person name="Angiuoli S.V."/>
            <person name="Kolonay J.F."/>
            <person name="Nelson W.C."/>
            <person name="Kolstoe A.-B."/>
            <person name="Fraser C.M."/>
            <person name="Read T.D."/>
        </authorList>
    </citation>
    <scope>NUCLEOTIDE SEQUENCE [LARGE SCALE GENOMIC DNA]</scope>
    <source>
        <strain>ATCC 10987 / NRS 248</strain>
    </source>
</reference>